<dbReference type="EC" id="2.5.1.59"/>
<dbReference type="EMBL" id="L24116">
    <property type="protein sequence ID" value="AAA17756.1"/>
    <property type="molecule type" value="mRNA"/>
</dbReference>
<dbReference type="PIR" id="B53044">
    <property type="entry name" value="B53044"/>
</dbReference>
<dbReference type="RefSeq" id="NP_112344.1">
    <property type="nucleotide sequence ID" value="NM_031082.2"/>
</dbReference>
<dbReference type="PDB" id="1N4P">
    <property type="method" value="X-ray"/>
    <property type="resolution" value="2.65 A"/>
    <property type="chains" value="B/D/F/H/J/L=1-377"/>
</dbReference>
<dbReference type="PDB" id="1N4Q">
    <property type="method" value="X-ray"/>
    <property type="resolution" value="2.40 A"/>
    <property type="chains" value="B/D/F/H/J/L=1-377"/>
</dbReference>
<dbReference type="PDB" id="1N4R">
    <property type="method" value="X-ray"/>
    <property type="resolution" value="2.80 A"/>
    <property type="chains" value="B/D/F/H/J/L=1-377"/>
</dbReference>
<dbReference type="PDB" id="1N4S">
    <property type="method" value="X-ray"/>
    <property type="resolution" value="2.60 A"/>
    <property type="chains" value="B/D/F/H/J/L=1-377"/>
</dbReference>
<dbReference type="PDB" id="1S64">
    <property type="method" value="X-ray"/>
    <property type="resolution" value="2.55 A"/>
    <property type="chains" value="B/D/F/H/J/L=1-377"/>
</dbReference>
<dbReference type="PDB" id="1TNB">
    <property type="method" value="X-ray"/>
    <property type="resolution" value="2.85 A"/>
    <property type="chains" value="B/D/F/H/J/L=1-377"/>
</dbReference>
<dbReference type="PDB" id="1TNO">
    <property type="method" value="X-ray"/>
    <property type="resolution" value="2.70 A"/>
    <property type="chains" value="B/D/F/H/J/L=1-377"/>
</dbReference>
<dbReference type="PDB" id="1TNU">
    <property type="method" value="X-ray"/>
    <property type="resolution" value="2.70 A"/>
    <property type="chains" value="B/D/F/H/J/L=1-377"/>
</dbReference>
<dbReference type="PDB" id="1TNY">
    <property type="method" value="X-ray"/>
    <property type="resolution" value="2.70 A"/>
    <property type="chains" value="B/D/F/H/J/L=1-377"/>
</dbReference>
<dbReference type="PDB" id="1TNZ">
    <property type="method" value="X-ray"/>
    <property type="resolution" value="2.90 A"/>
    <property type="chains" value="B/D/F/H/J/L=1-377"/>
</dbReference>
<dbReference type="PDB" id="8RDX">
    <property type="method" value="X-ray"/>
    <property type="resolution" value="3.67 A"/>
    <property type="chains" value="B/D/F/H/J/L=18-363"/>
</dbReference>
<dbReference type="PDBsum" id="1N4P"/>
<dbReference type="PDBsum" id="1N4Q"/>
<dbReference type="PDBsum" id="1N4R"/>
<dbReference type="PDBsum" id="1N4S"/>
<dbReference type="PDBsum" id="1S64"/>
<dbReference type="PDBsum" id="1TNB"/>
<dbReference type="PDBsum" id="1TNO"/>
<dbReference type="PDBsum" id="1TNU"/>
<dbReference type="PDBsum" id="1TNY"/>
<dbReference type="PDBsum" id="1TNZ"/>
<dbReference type="PDBsum" id="8RDX"/>
<dbReference type="SMR" id="P53610"/>
<dbReference type="CORUM" id="P53610"/>
<dbReference type="DIP" id="DIP-33953N"/>
<dbReference type="FunCoup" id="P53610">
    <property type="interactions" value="3210"/>
</dbReference>
<dbReference type="IntAct" id="P53610">
    <property type="interactions" value="2"/>
</dbReference>
<dbReference type="STRING" id="10116.ENSRNOP00000004723"/>
<dbReference type="BindingDB" id="P53610"/>
<dbReference type="ChEMBL" id="CHEMBL2111479"/>
<dbReference type="PhosphoSitePlus" id="P53610"/>
<dbReference type="PaxDb" id="10116-ENSRNOP00000004723"/>
<dbReference type="Ensembl" id="ENSRNOT00000004723.4">
    <property type="protein sequence ID" value="ENSRNOP00000004723.1"/>
    <property type="gene ID" value="ENSRNOG00000003541.4"/>
</dbReference>
<dbReference type="GeneID" id="81746"/>
<dbReference type="KEGG" id="rno:81746"/>
<dbReference type="UCSC" id="RGD:621754">
    <property type="organism name" value="rat"/>
</dbReference>
<dbReference type="AGR" id="RGD:621754"/>
<dbReference type="CTD" id="5229"/>
<dbReference type="RGD" id="621754">
    <property type="gene designation" value="Pggt1b"/>
</dbReference>
<dbReference type="eggNOG" id="KOG0367">
    <property type="taxonomic scope" value="Eukaryota"/>
</dbReference>
<dbReference type="GeneTree" id="ENSGT00950000183128"/>
<dbReference type="HOGENOM" id="CLU_028946_2_2_1"/>
<dbReference type="InParanoid" id="P53610"/>
<dbReference type="OMA" id="RWCLMRQ"/>
<dbReference type="OrthoDB" id="4269at9989"/>
<dbReference type="PhylomeDB" id="P53610"/>
<dbReference type="TreeFam" id="TF105968"/>
<dbReference type="BRENDA" id="2.5.1.59">
    <property type="organism ID" value="5301"/>
</dbReference>
<dbReference type="EvolutionaryTrace" id="P53610"/>
<dbReference type="PRO" id="PR:P53610"/>
<dbReference type="Proteomes" id="UP000002494">
    <property type="component" value="Chromosome 18"/>
</dbReference>
<dbReference type="Bgee" id="ENSRNOG00000003541">
    <property type="expression patterns" value="Expressed in ileum and 20 other cell types or tissues"/>
</dbReference>
<dbReference type="GO" id="GO:0005953">
    <property type="term" value="C:CAAX-protein geranylgeranyltransferase complex"/>
    <property type="evidence" value="ECO:0000314"/>
    <property type="project" value="UniProtKB"/>
</dbReference>
<dbReference type="GO" id="GO:0004662">
    <property type="term" value="F:CAAX-protein geranylgeranyltransferase activity"/>
    <property type="evidence" value="ECO:0000314"/>
    <property type="project" value="UniProtKB"/>
</dbReference>
<dbReference type="GO" id="GO:1901363">
    <property type="term" value="F:heterocyclic compound binding"/>
    <property type="evidence" value="ECO:0000314"/>
    <property type="project" value="RGD"/>
</dbReference>
<dbReference type="GO" id="GO:0004661">
    <property type="term" value="F:protein geranylgeranyltransferase activity"/>
    <property type="evidence" value="ECO:0000250"/>
    <property type="project" value="UniProtKB"/>
</dbReference>
<dbReference type="GO" id="GO:0008270">
    <property type="term" value="F:zinc ion binding"/>
    <property type="evidence" value="ECO:0000314"/>
    <property type="project" value="UniProtKB"/>
</dbReference>
<dbReference type="GO" id="GO:0045787">
    <property type="term" value="P:positive regulation of cell cycle"/>
    <property type="evidence" value="ECO:0000315"/>
    <property type="project" value="RGD"/>
</dbReference>
<dbReference type="GO" id="GO:0008284">
    <property type="term" value="P:positive regulation of cell population proliferation"/>
    <property type="evidence" value="ECO:0000315"/>
    <property type="project" value="RGD"/>
</dbReference>
<dbReference type="GO" id="GO:0018344">
    <property type="term" value="P:protein geranylgeranylation"/>
    <property type="evidence" value="ECO:0000314"/>
    <property type="project" value="UniProtKB"/>
</dbReference>
<dbReference type="CDD" id="cd02895">
    <property type="entry name" value="GGTase-I"/>
    <property type="match status" value="1"/>
</dbReference>
<dbReference type="FunFam" id="1.50.10.20:FF:000005">
    <property type="entry name" value="Geranylgeranyl transferase type-1 subunit beta"/>
    <property type="match status" value="1"/>
</dbReference>
<dbReference type="Gene3D" id="1.50.10.20">
    <property type="match status" value="1"/>
</dbReference>
<dbReference type="InterPro" id="IPR041960">
    <property type="entry name" value="GGTase_I_beta"/>
</dbReference>
<dbReference type="InterPro" id="IPR045089">
    <property type="entry name" value="PGGT1B-like"/>
</dbReference>
<dbReference type="InterPro" id="IPR001330">
    <property type="entry name" value="Prenyltrans"/>
</dbReference>
<dbReference type="InterPro" id="IPR008930">
    <property type="entry name" value="Terpenoid_cyclase/PrenylTrfase"/>
</dbReference>
<dbReference type="PANTHER" id="PTHR11774">
    <property type="entry name" value="GERANYLGERANYL TRANSFERASE TYPE BETA SUBUNIT"/>
    <property type="match status" value="1"/>
</dbReference>
<dbReference type="PANTHER" id="PTHR11774:SF4">
    <property type="entry name" value="GERANYLGERANYL TRANSFERASE TYPE-1 SUBUNIT BETA"/>
    <property type="match status" value="1"/>
</dbReference>
<dbReference type="Pfam" id="PF00432">
    <property type="entry name" value="Prenyltrans"/>
    <property type="match status" value="1"/>
</dbReference>
<dbReference type="SFLD" id="SFLDG01015">
    <property type="entry name" value="Prenyltransferase_Like_1"/>
    <property type="match status" value="1"/>
</dbReference>
<dbReference type="SUPFAM" id="SSF48239">
    <property type="entry name" value="Terpenoid cyclases/Protein prenyltransferases"/>
    <property type="match status" value="1"/>
</dbReference>
<reference key="1">
    <citation type="journal article" date="1994" name="J. Biol. Chem.">
        <title>cDNA cloning and expression of rat and human protein geranylgeranyltransferase type-I.</title>
        <authorList>
            <person name="Zhang F.L."/>
            <person name="Diehl R.E."/>
            <person name="Kohl N.E."/>
            <person name="Gibbs J.B."/>
            <person name="Giros B."/>
            <person name="Casey P.J."/>
            <person name="Omer C.A."/>
        </authorList>
    </citation>
    <scope>NUCLEOTIDE SEQUENCE [MRNA]</scope>
    <source>
        <tissue>Brain</tissue>
    </source>
</reference>
<reference key="2">
    <citation type="journal article" date="2003" name="EMBO J.">
        <title>Structure of mammalian protein geranylgeranyltransferase type-I.</title>
        <authorList>
            <person name="Taylor J.S."/>
            <person name="Reid T.S."/>
            <person name="Terry K.L."/>
            <person name="Casey P.J."/>
            <person name="Beese L.S."/>
        </authorList>
    </citation>
    <scope>X-RAY CRYSTALLOGRAPHY (2.65 ANGSTROMS) IN COMPLEX WITH FNTA; ZINC IONS; SUBSTRATE PEPTIDE AND ISPRENOID ANALOG</scope>
    <scope>SUBUNIT</scope>
    <scope>COFACTOR</scope>
    <scope>FUNCTION</scope>
    <scope>CATALYTIC ACTIVITY</scope>
</reference>
<reference key="3">
    <citation type="journal article" date="2004" name="Biochemistry">
        <title>Crystallographic analysis reveals that anticancer clinical candidate L-778,123 inhibits protein farnesyltransferase and geranylgeranyltransferase-I by different binding modes.</title>
        <authorList>
            <person name="Reid T.S."/>
            <person name="Long S.B."/>
            <person name="Beese L.S."/>
        </authorList>
    </citation>
    <scope>X-RAY CRYSTALLOGRAPHY (2.55 ANGSTROMS) IN COMPLEX WITH FNTA; ZINC IONS AND INHIBITOR</scope>
    <scope>SUBUNIT</scope>
    <scope>COFACTOR</scope>
</reference>
<reference key="4">
    <citation type="journal article" date="2004" name="J. Mol. Biol.">
        <title>Crystallographic analysis of CaaX prenyltransferases complexed with substrates defines rules of protein substrate selectivity.</title>
        <authorList>
            <person name="Reid T.S."/>
            <person name="Terry K.L."/>
            <person name="Casey P.J."/>
            <person name="Beese L.S."/>
        </authorList>
    </citation>
    <scope>X-RAY CRYSTALLOGRAPHY (2.70 ANGSTROMS) IN COMPLEX WITH FNTA; ZINC IONS AND SUBSTRATES</scope>
    <scope>SUBUNIT</scope>
    <scope>COFACTOR</scope>
</reference>
<protein>
    <recommendedName>
        <fullName>Geranylgeranyl transferase type-1 subunit beta</fullName>
        <ecNumber>2.5.1.59</ecNumber>
    </recommendedName>
    <alternativeName>
        <fullName>Geranylgeranyl transferase type I subunit beta</fullName>
        <shortName>GGTase-I-beta</shortName>
    </alternativeName>
    <alternativeName>
        <fullName>Type I protein geranyl-geranyltransferase subunit beta</fullName>
    </alternativeName>
</protein>
<feature type="chain" id="PRO_0000119771" description="Geranylgeranyl transferase type-1 subunit beta">
    <location>
        <begin position="1"/>
        <end position="377"/>
    </location>
</feature>
<feature type="repeat" description="PFTB 1" evidence="2">
    <location>
        <begin position="144"/>
        <end position="186"/>
    </location>
</feature>
<feature type="repeat" description="PFTB 2" evidence="2">
    <location>
        <begin position="193"/>
        <end position="234"/>
    </location>
</feature>
<feature type="repeat" description="PFTB 3" evidence="2">
    <location>
        <begin position="245"/>
        <end position="284"/>
    </location>
</feature>
<feature type="repeat" description="PFTB 4" evidence="2">
    <location>
        <begin position="291"/>
        <end position="333"/>
    </location>
</feature>
<feature type="binding site" evidence="3 7">
    <location>
        <begin position="219"/>
        <end position="221"/>
    </location>
    <ligand>
        <name>geranylgeranyl diphosphate</name>
        <dbReference type="ChEBI" id="CHEBI:57533"/>
    </ligand>
</feature>
<feature type="binding site" evidence="3 7">
    <location>
        <begin position="263"/>
        <end position="266"/>
    </location>
    <ligand>
        <name>geranylgeranyl diphosphate</name>
        <dbReference type="ChEBI" id="CHEBI:57533"/>
    </ligand>
</feature>
<feature type="binding site" evidence="3 7">
    <location>
        <position position="269"/>
    </location>
    <ligand>
        <name>Zn(2+)</name>
        <dbReference type="ChEBI" id="CHEBI:29105"/>
        <note>catalytic</note>
    </ligand>
</feature>
<feature type="binding site" evidence="3 7">
    <location>
        <position position="271"/>
    </location>
    <ligand>
        <name>Zn(2+)</name>
        <dbReference type="ChEBI" id="CHEBI:29105"/>
        <note>catalytic</note>
    </ligand>
</feature>
<feature type="binding site" evidence="3 7">
    <location>
        <begin position="272"/>
        <end position="275"/>
    </location>
    <ligand>
        <name>geranylgeranyl diphosphate</name>
        <dbReference type="ChEBI" id="CHEBI:57533"/>
    </ligand>
</feature>
<feature type="binding site" evidence="3 7">
    <location>
        <position position="321"/>
    </location>
    <ligand>
        <name>Zn(2+)</name>
        <dbReference type="ChEBI" id="CHEBI:29105"/>
        <note>catalytic</note>
    </ligand>
</feature>
<feature type="helix" evidence="8">
    <location>
        <begin position="22"/>
        <end position="34"/>
    </location>
</feature>
<feature type="helix" evidence="8">
    <location>
        <begin position="38"/>
        <end position="46"/>
    </location>
</feature>
<feature type="helix" evidence="8">
    <location>
        <begin position="47"/>
        <end position="60"/>
    </location>
</feature>
<feature type="helix" evidence="8">
    <location>
        <begin position="64"/>
        <end position="66"/>
    </location>
</feature>
<feature type="helix" evidence="8">
    <location>
        <begin position="69"/>
        <end position="77"/>
    </location>
</feature>
<feature type="helix" evidence="8">
    <location>
        <begin position="90"/>
        <end position="92"/>
    </location>
</feature>
<feature type="strand" evidence="8">
    <location>
        <begin position="97"/>
        <end position="99"/>
    </location>
</feature>
<feature type="helix" evidence="8">
    <location>
        <begin position="122"/>
        <end position="134"/>
    </location>
</feature>
<feature type="helix" evidence="8">
    <location>
        <begin position="144"/>
        <end position="154"/>
    </location>
</feature>
<feature type="strand" evidence="9">
    <location>
        <begin position="161"/>
        <end position="164"/>
    </location>
</feature>
<feature type="helix" evidence="8">
    <location>
        <begin position="172"/>
        <end position="184"/>
    </location>
</feature>
<feature type="helix" evidence="8">
    <location>
        <begin position="188"/>
        <end position="190"/>
    </location>
</feature>
<feature type="helix" evidence="8">
    <location>
        <begin position="193"/>
        <end position="202"/>
    </location>
</feature>
<feature type="strand" evidence="8">
    <location>
        <begin position="208"/>
        <end position="213"/>
    </location>
</feature>
<feature type="helix" evidence="8">
    <location>
        <begin position="220"/>
        <end position="233"/>
    </location>
</feature>
<feature type="helix" evidence="8">
    <location>
        <begin position="236"/>
        <end position="239"/>
    </location>
</feature>
<feature type="helix" evidence="8">
    <location>
        <begin position="242"/>
        <end position="253"/>
    </location>
</feature>
<feature type="strand" evidence="8">
    <location>
        <begin position="256"/>
        <end position="260"/>
    </location>
</feature>
<feature type="helix" evidence="8">
    <location>
        <begin position="272"/>
        <end position="282"/>
    </location>
</feature>
<feature type="helix" evidence="8">
    <location>
        <begin position="286"/>
        <end position="288"/>
    </location>
</feature>
<feature type="helix" evidence="8">
    <location>
        <begin position="291"/>
        <end position="299"/>
    </location>
</feature>
<feature type="turn" evidence="8">
    <location>
        <begin position="304"/>
        <end position="306"/>
    </location>
</feature>
<feature type="strand" evidence="10">
    <location>
        <begin position="311"/>
        <end position="315"/>
    </location>
</feature>
<feature type="helix" evidence="8">
    <location>
        <begin position="319"/>
        <end position="331"/>
    </location>
</feature>
<feature type="turn" evidence="8">
    <location>
        <begin position="342"/>
        <end position="345"/>
    </location>
</feature>
<feature type="helix" evidence="8">
    <location>
        <begin position="348"/>
        <end position="361"/>
    </location>
</feature>
<accession>P53610</accession>
<comment type="function">
    <text evidence="3">Catalyzes the transfer of a geranylgeranyl moiety from geranylgeranyl diphosphate to a cysteine at the fourth position from the C-terminus of proteins with the C-terminal sequence Cys-aliphatic-aliphatic-X. Known substrates include RAC1, RAC2, RAP1A and RAP1B.</text>
</comment>
<comment type="catalytic activity">
    <reaction evidence="3">
        <text>geranylgeranyl diphosphate + L-cysteinyl-[protein] = S-geranylgeranyl-L-cysteinyl-[protein] + diphosphate</text>
        <dbReference type="Rhea" id="RHEA:21240"/>
        <dbReference type="Rhea" id="RHEA-COMP:10131"/>
        <dbReference type="Rhea" id="RHEA-COMP:11537"/>
        <dbReference type="ChEBI" id="CHEBI:29950"/>
        <dbReference type="ChEBI" id="CHEBI:33019"/>
        <dbReference type="ChEBI" id="CHEBI:57533"/>
        <dbReference type="ChEBI" id="CHEBI:86021"/>
        <dbReference type="EC" id="2.5.1.59"/>
    </reaction>
</comment>
<comment type="cofactor">
    <cofactor evidence="3 4 5">
        <name>Zn(2+)</name>
        <dbReference type="ChEBI" id="CHEBI:29105"/>
    </cofactor>
    <text evidence="3 4 5">Binds 1 zinc ion per subunit.</text>
</comment>
<comment type="cofactor">
    <cofactor evidence="1">
        <name>Mg(2+)</name>
        <dbReference type="ChEBI" id="CHEBI:18420"/>
    </cofactor>
</comment>
<comment type="subunit">
    <text evidence="3 4 5">Heterodimer of FNTA and PGGT1B. PGGT1B mediates interaction with substrate peptides.</text>
</comment>
<comment type="interaction">
    <interactant intactId="EBI-602610">
        <id>P53610</id>
    </interactant>
    <interactant intactId="EBI-602447">
        <id>Q04631</id>
        <label>Fnta</label>
    </interactant>
    <organismsDiffer>false</organismsDiffer>
    <experiments>7</experiments>
</comment>
<comment type="similarity">
    <text evidence="6">Belongs to the protein prenyltransferase subunit beta family.</text>
</comment>
<evidence type="ECO:0000250" key="1">
    <source>
        <dbReference type="UniProtKB" id="P18898"/>
    </source>
</evidence>
<evidence type="ECO:0000255" key="2"/>
<evidence type="ECO:0000269" key="3">
    <source>
    </source>
</evidence>
<evidence type="ECO:0000269" key="4">
    <source>
    </source>
</evidence>
<evidence type="ECO:0000269" key="5">
    <source>
    </source>
</evidence>
<evidence type="ECO:0000305" key="6"/>
<evidence type="ECO:0007744" key="7">
    <source>
        <dbReference type="PDB" id="1N4P"/>
    </source>
</evidence>
<evidence type="ECO:0007829" key="8">
    <source>
        <dbReference type="PDB" id="1N4Q"/>
    </source>
</evidence>
<evidence type="ECO:0007829" key="9">
    <source>
        <dbReference type="PDB" id="1N4S"/>
    </source>
</evidence>
<evidence type="ECO:0007829" key="10">
    <source>
        <dbReference type="PDB" id="1TNO"/>
    </source>
</evidence>
<gene>
    <name type="primary">Pggt1b</name>
</gene>
<sequence>MAATEDDRLAGSGEGERLDFLRDRHVRFFQRCLQVLPERYSSLETSRLTIAFFALSGLDMLDSLDVVNKDDIIEWIYSLQVLPTEDRSNLDRCGFRGSSYLGIPFNPSKNPGTAHPYDSGHIAMTYTGLSCLIILGDDLSRVDKEACLAGLRALQLEDGSFCAVPEGSENDMRFVYCASCICYMLNNWSGMDMKKAISYIRRSMSYDNGLAQGAGLESHGGSTFCGIASLCLMGKLEEVFSEKELNRIKRWCIMRQQNGYHGRPNKPVDTCYSFWVGATLKLLKIFQYTNFEKNRNYILSTQDRLVGGFAKWPDSHPDALHAYFGICGLSLMEESGICKVHPALNVSTRTSERLRDLHQSWKTKDSKQCSDNVHISS</sequence>
<keyword id="KW-0002">3D-structure</keyword>
<keyword id="KW-0460">Magnesium</keyword>
<keyword id="KW-0479">Metal-binding</keyword>
<keyword id="KW-0637">Prenyltransferase</keyword>
<keyword id="KW-1185">Reference proteome</keyword>
<keyword id="KW-0677">Repeat</keyword>
<keyword id="KW-0808">Transferase</keyword>
<keyword id="KW-0862">Zinc</keyword>
<name>PGTB1_RAT</name>
<proteinExistence type="evidence at protein level"/>
<organism>
    <name type="scientific">Rattus norvegicus</name>
    <name type="common">Rat</name>
    <dbReference type="NCBI Taxonomy" id="10116"/>
    <lineage>
        <taxon>Eukaryota</taxon>
        <taxon>Metazoa</taxon>
        <taxon>Chordata</taxon>
        <taxon>Craniata</taxon>
        <taxon>Vertebrata</taxon>
        <taxon>Euteleostomi</taxon>
        <taxon>Mammalia</taxon>
        <taxon>Eutheria</taxon>
        <taxon>Euarchontoglires</taxon>
        <taxon>Glires</taxon>
        <taxon>Rodentia</taxon>
        <taxon>Myomorpha</taxon>
        <taxon>Muroidea</taxon>
        <taxon>Muridae</taxon>
        <taxon>Murinae</taxon>
        <taxon>Rattus</taxon>
    </lineage>
</organism>